<feature type="chain" id="PRO_0000257581" description="Putative pre-16S rRNA nuclease">
    <location>
        <begin position="1"/>
        <end position="154"/>
    </location>
</feature>
<evidence type="ECO:0000255" key="1">
    <source>
        <dbReference type="HAMAP-Rule" id="MF_00651"/>
    </source>
</evidence>
<proteinExistence type="inferred from homology"/>
<sequence>MIINNLQEFYRLLLPNAPLISIDYGSKKIGIAISNQERNIAMPLNIITEASKKAIIASLLEKIEQYKACGIVIGLPIDMSGMQTEQSAIVIKFAEELTKSINLPIYLQDERLTTKAANNFLKSFGIKRKERNNNDDAVAASMILETVLNSINKL</sequence>
<comment type="function">
    <text evidence="1">Could be a nuclease involved in processing of the 5'-end of pre-16S rRNA.</text>
</comment>
<comment type="subcellular location">
    <subcellularLocation>
        <location evidence="1">Cytoplasm</location>
    </subcellularLocation>
</comment>
<comment type="similarity">
    <text evidence="1">Belongs to the YqgF nuclease family.</text>
</comment>
<reference key="1">
    <citation type="journal article" date="2006" name="PLoS Genet.">
        <title>Genome sequence of Rickettsia bellii illuminates the role of amoebae in gene exchanges between intracellular pathogens.</title>
        <authorList>
            <person name="Ogata H."/>
            <person name="La Scola B."/>
            <person name="Audic S."/>
            <person name="Renesto P."/>
            <person name="Blanc G."/>
            <person name="Robert C."/>
            <person name="Fournier P.-E."/>
            <person name="Claverie J.-M."/>
            <person name="Raoult D."/>
        </authorList>
    </citation>
    <scope>NUCLEOTIDE SEQUENCE [LARGE SCALE GENOMIC DNA]</scope>
    <source>
        <strain>RML369-C</strain>
    </source>
</reference>
<keyword id="KW-0963">Cytoplasm</keyword>
<keyword id="KW-0378">Hydrolase</keyword>
<keyword id="KW-0540">Nuclease</keyword>
<keyword id="KW-0690">Ribosome biogenesis</keyword>
<gene>
    <name type="ordered locus">RBE_0807</name>
</gene>
<dbReference type="EC" id="3.1.-.-" evidence="1"/>
<dbReference type="EMBL" id="CP000087">
    <property type="protein sequence ID" value="ABE04888.1"/>
    <property type="molecule type" value="Genomic_DNA"/>
</dbReference>
<dbReference type="SMR" id="Q1RIC6"/>
<dbReference type="KEGG" id="rbe:RBE_0807"/>
<dbReference type="eggNOG" id="COG0816">
    <property type="taxonomic scope" value="Bacteria"/>
</dbReference>
<dbReference type="HOGENOM" id="CLU_098240_2_2_5"/>
<dbReference type="OrthoDB" id="9796140at2"/>
<dbReference type="Proteomes" id="UP000001951">
    <property type="component" value="Chromosome"/>
</dbReference>
<dbReference type="GO" id="GO:0005829">
    <property type="term" value="C:cytosol"/>
    <property type="evidence" value="ECO:0007669"/>
    <property type="project" value="TreeGrafter"/>
</dbReference>
<dbReference type="GO" id="GO:0004518">
    <property type="term" value="F:nuclease activity"/>
    <property type="evidence" value="ECO:0007669"/>
    <property type="project" value="UniProtKB-KW"/>
</dbReference>
<dbReference type="GO" id="GO:0000967">
    <property type="term" value="P:rRNA 5'-end processing"/>
    <property type="evidence" value="ECO:0007669"/>
    <property type="project" value="UniProtKB-UniRule"/>
</dbReference>
<dbReference type="CDD" id="cd16964">
    <property type="entry name" value="YqgF"/>
    <property type="match status" value="1"/>
</dbReference>
<dbReference type="Gene3D" id="3.30.420.140">
    <property type="entry name" value="YqgF/RNase H-like domain"/>
    <property type="match status" value="1"/>
</dbReference>
<dbReference type="HAMAP" id="MF_00651">
    <property type="entry name" value="Nuclease_YqgF"/>
    <property type="match status" value="1"/>
</dbReference>
<dbReference type="InterPro" id="IPR012337">
    <property type="entry name" value="RNaseH-like_sf"/>
</dbReference>
<dbReference type="InterPro" id="IPR005227">
    <property type="entry name" value="YqgF"/>
</dbReference>
<dbReference type="InterPro" id="IPR006641">
    <property type="entry name" value="YqgF/RNaseH-like_dom"/>
</dbReference>
<dbReference type="InterPro" id="IPR037027">
    <property type="entry name" value="YqgF/RNaseH-like_dom_sf"/>
</dbReference>
<dbReference type="NCBIfam" id="TIGR00250">
    <property type="entry name" value="RNAse_H_YqgF"/>
    <property type="match status" value="1"/>
</dbReference>
<dbReference type="PANTHER" id="PTHR33317">
    <property type="entry name" value="POLYNUCLEOTIDYL TRANSFERASE, RIBONUCLEASE H-LIKE SUPERFAMILY PROTEIN"/>
    <property type="match status" value="1"/>
</dbReference>
<dbReference type="PANTHER" id="PTHR33317:SF4">
    <property type="entry name" value="POLYNUCLEOTIDYL TRANSFERASE, RIBONUCLEASE H-LIKE SUPERFAMILY PROTEIN"/>
    <property type="match status" value="1"/>
</dbReference>
<dbReference type="Pfam" id="PF03652">
    <property type="entry name" value="RuvX"/>
    <property type="match status" value="1"/>
</dbReference>
<dbReference type="SMART" id="SM00732">
    <property type="entry name" value="YqgFc"/>
    <property type="match status" value="1"/>
</dbReference>
<dbReference type="SUPFAM" id="SSF53098">
    <property type="entry name" value="Ribonuclease H-like"/>
    <property type="match status" value="1"/>
</dbReference>
<accession>Q1RIC6</accession>
<organism>
    <name type="scientific">Rickettsia bellii (strain RML369-C)</name>
    <dbReference type="NCBI Taxonomy" id="336407"/>
    <lineage>
        <taxon>Bacteria</taxon>
        <taxon>Pseudomonadati</taxon>
        <taxon>Pseudomonadota</taxon>
        <taxon>Alphaproteobacteria</taxon>
        <taxon>Rickettsiales</taxon>
        <taxon>Rickettsiaceae</taxon>
        <taxon>Rickettsieae</taxon>
        <taxon>Rickettsia</taxon>
        <taxon>belli group</taxon>
    </lineage>
</organism>
<name>YQGF_RICBR</name>
<protein>
    <recommendedName>
        <fullName evidence="1">Putative pre-16S rRNA nuclease</fullName>
        <ecNumber evidence="1">3.1.-.-</ecNumber>
    </recommendedName>
</protein>